<protein>
    <recommendedName>
        <fullName>G patch domain-containing protein 2-like</fullName>
    </recommendedName>
</protein>
<proteinExistence type="evidence at protein level"/>
<accession>Q9NWQ4</accession>
<accession>B3KN42</accession>
<accession>Q6PEJ7</accession>
<accession>Q9H3M3</accession>
<accession>Q9NWH0</accession>
<accession>Q9ULR8</accession>
<name>GPT2L_HUMAN</name>
<organism>
    <name type="scientific">Homo sapiens</name>
    <name type="common">Human</name>
    <dbReference type="NCBI Taxonomy" id="9606"/>
    <lineage>
        <taxon>Eukaryota</taxon>
        <taxon>Metazoa</taxon>
        <taxon>Chordata</taxon>
        <taxon>Craniata</taxon>
        <taxon>Vertebrata</taxon>
        <taxon>Euteleostomi</taxon>
        <taxon>Mammalia</taxon>
        <taxon>Eutheria</taxon>
        <taxon>Euarchontoglires</taxon>
        <taxon>Primates</taxon>
        <taxon>Haplorrhini</taxon>
        <taxon>Catarrhini</taxon>
        <taxon>Hominidae</taxon>
        <taxon>Homo</taxon>
    </lineage>
</organism>
<gene>
    <name type="primary">GPATCH2L</name>
    <name type="synonym">C14orf118</name>
    <name type="synonym">KIAA1152</name>
</gene>
<feature type="chain" id="PRO_0000089927" description="G patch domain-containing protein 2-like">
    <location>
        <begin position="1"/>
        <end position="482"/>
    </location>
</feature>
<feature type="region of interest" description="Disordered" evidence="1">
    <location>
        <begin position="198"/>
        <end position="247"/>
    </location>
</feature>
<feature type="region of interest" description="Disordered" evidence="1">
    <location>
        <begin position="413"/>
        <end position="482"/>
    </location>
</feature>
<feature type="compositionally biased region" description="Basic and acidic residues" evidence="1">
    <location>
        <begin position="198"/>
        <end position="214"/>
    </location>
</feature>
<feature type="compositionally biased region" description="Low complexity" evidence="1">
    <location>
        <begin position="220"/>
        <end position="230"/>
    </location>
</feature>
<feature type="compositionally biased region" description="Polar residues" evidence="1">
    <location>
        <begin position="439"/>
        <end position="450"/>
    </location>
</feature>
<feature type="compositionally biased region" description="Low complexity" evidence="1">
    <location>
        <begin position="456"/>
        <end position="469"/>
    </location>
</feature>
<feature type="modified residue" description="Phosphoserine" evidence="10">
    <location>
        <position position="31"/>
    </location>
</feature>
<feature type="modified residue" description="Phosphoserine" evidence="6 7 8 9">
    <location>
        <position position="86"/>
    </location>
</feature>
<feature type="modified residue" description="Phosphoserine" evidence="6 7 8 9">
    <location>
        <position position="88"/>
    </location>
</feature>
<feature type="modified residue" description="Phosphothreonine" evidence="9">
    <location>
        <position position="91"/>
    </location>
</feature>
<feature type="modified residue" description="Phosphoserine" evidence="8 9">
    <location>
        <position position="447"/>
    </location>
</feature>
<feature type="modified residue" description="Phosphoserine" evidence="9">
    <location>
        <position position="449"/>
    </location>
</feature>
<feature type="cross-link" description="Glycyl lysine isopeptide (Lys-Gly) (interchain with G-Cter in SUMO2)" evidence="11">
    <location>
        <position position="196"/>
    </location>
</feature>
<feature type="splice variant" id="VSP_014714" description="In isoform 2." evidence="2 3 4">
    <original>ETSINTLGTERISHIISDPRQKE</original>
    <variation>VIPLTVSLAQWGDNIPYGSCVSY</variation>
    <location>
        <begin position="329"/>
        <end position="351"/>
    </location>
</feature>
<feature type="splice variant" id="VSP_039861" description="In isoform 4." evidence="3">
    <original>EKNKALASDFPHISACAHE</original>
    <variation>DFWLPSAGKRERNQ</variation>
    <location>
        <begin position="351"/>
        <end position="369"/>
    </location>
</feature>
<feature type="splice variant" id="VSP_014716" description="In isoform 2." evidence="2 3 4">
    <location>
        <begin position="352"/>
        <end position="482"/>
    </location>
</feature>
<feature type="sequence variant" id="VAR_056838" description="In dbSNP:rs17104086.">
    <original>V</original>
    <variation>E</variation>
    <location>
        <position position="132"/>
    </location>
</feature>
<feature type="sequence conflict" description="In Ref. 2; BAA91325." evidence="5" ref="2">
    <original>S</original>
    <variation>L</variation>
    <location>
        <position position="187"/>
    </location>
</feature>
<feature type="sequence conflict" description="In Ref. 2; BAA91325." evidence="5" ref="2">
    <original>R</original>
    <variation>G</variation>
    <location>
        <position position="241"/>
    </location>
</feature>
<feature type="sequence conflict" description="In Ref. 2; BAA91411." evidence="5" ref="2">
    <original>D</original>
    <variation>V</variation>
    <location>
        <position position="411"/>
    </location>
</feature>
<keyword id="KW-0025">Alternative splicing</keyword>
<keyword id="KW-1017">Isopeptide bond</keyword>
<keyword id="KW-0597">Phosphoprotein</keyword>
<keyword id="KW-1267">Proteomics identification</keyword>
<keyword id="KW-1185">Reference proteome</keyword>
<keyword id="KW-0832">Ubl conjugation</keyword>
<reference key="1">
    <citation type="journal article" date="1999" name="DNA Res.">
        <title>Characterization of cDNA clones selected by the GeneMark analysis from size-fractionated cDNA libraries from human brain.</title>
        <authorList>
            <person name="Hirosawa M."/>
            <person name="Nagase T."/>
            <person name="Ishikawa K."/>
            <person name="Kikuno R."/>
            <person name="Nomura N."/>
            <person name="Ohara O."/>
        </authorList>
    </citation>
    <scope>NUCLEOTIDE SEQUENCE [LARGE SCALE MRNA] (ISOFORM 2)</scope>
    <source>
        <tissue>Brain</tissue>
    </source>
</reference>
<reference key="2">
    <citation type="journal article" date="2004" name="Nat. Genet.">
        <title>Complete sequencing and characterization of 21,243 full-length human cDNAs.</title>
        <authorList>
            <person name="Ota T."/>
            <person name="Suzuki Y."/>
            <person name="Nishikawa T."/>
            <person name="Otsuki T."/>
            <person name="Sugiyama T."/>
            <person name="Irie R."/>
            <person name="Wakamatsu A."/>
            <person name="Hayashi K."/>
            <person name="Sato H."/>
            <person name="Nagai K."/>
            <person name="Kimura K."/>
            <person name="Makita H."/>
            <person name="Sekine M."/>
            <person name="Obayashi M."/>
            <person name="Nishi T."/>
            <person name="Shibahara T."/>
            <person name="Tanaka T."/>
            <person name="Ishii S."/>
            <person name="Yamamoto J."/>
            <person name="Saito K."/>
            <person name="Kawai Y."/>
            <person name="Isono Y."/>
            <person name="Nakamura Y."/>
            <person name="Nagahari K."/>
            <person name="Murakami K."/>
            <person name="Yasuda T."/>
            <person name="Iwayanagi T."/>
            <person name="Wagatsuma M."/>
            <person name="Shiratori A."/>
            <person name="Sudo H."/>
            <person name="Hosoiri T."/>
            <person name="Kaku Y."/>
            <person name="Kodaira H."/>
            <person name="Kondo H."/>
            <person name="Sugawara M."/>
            <person name="Takahashi M."/>
            <person name="Kanda K."/>
            <person name="Yokoi T."/>
            <person name="Furuya T."/>
            <person name="Kikkawa E."/>
            <person name="Omura Y."/>
            <person name="Abe K."/>
            <person name="Kamihara K."/>
            <person name="Katsuta N."/>
            <person name="Sato K."/>
            <person name="Tanikawa M."/>
            <person name="Yamazaki M."/>
            <person name="Ninomiya K."/>
            <person name="Ishibashi T."/>
            <person name="Yamashita H."/>
            <person name="Murakawa K."/>
            <person name="Fujimori K."/>
            <person name="Tanai H."/>
            <person name="Kimata M."/>
            <person name="Watanabe M."/>
            <person name="Hiraoka S."/>
            <person name="Chiba Y."/>
            <person name="Ishida S."/>
            <person name="Ono Y."/>
            <person name="Takiguchi S."/>
            <person name="Watanabe S."/>
            <person name="Yosida M."/>
            <person name="Hotuta T."/>
            <person name="Kusano J."/>
            <person name="Kanehori K."/>
            <person name="Takahashi-Fujii A."/>
            <person name="Hara H."/>
            <person name="Tanase T.-O."/>
            <person name="Nomura Y."/>
            <person name="Togiya S."/>
            <person name="Komai F."/>
            <person name="Hara R."/>
            <person name="Takeuchi K."/>
            <person name="Arita M."/>
            <person name="Imose N."/>
            <person name="Musashino K."/>
            <person name="Yuuki H."/>
            <person name="Oshima A."/>
            <person name="Sasaki N."/>
            <person name="Aotsuka S."/>
            <person name="Yoshikawa Y."/>
            <person name="Matsunawa H."/>
            <person name="Ichihara T."/>
            <person name="Shiohata N."/>
            <person name="Sano S."/>
            <person name="Moriya S."/>
            <person name="Momiyama H."/>
            <person name="Satoh N."/>
            <person name="Takami S."/>
            <person name="Terashima Y."/>
            <person name="Suzuki O."/>
            <person name="Nakagawa S."/>
            <person name="Senoh A."/>
            <person name="Mizoguchi H."/>
            <person name="Goto Y."/>
            <person name="Shimizu F."/>
            <person name="Wakebe H."/>
            <person name="Hishigaki H."/>
            <person name="Watanabe T."/>
            <person name="Sugiyama A."/>
            <person name="Takemoto M."/>
            <person name="Kawakami B."/>
            <person name="Yamazaki M."/>
            <person name="Watanabe K."/>
            <person name="Kumagai A."/>
            <person name="Itakura S."/>
            <person name="Fukuzumi Y."/>
            <person name="Fujimori Y."/>
            <person name="Komiyama M."/>
            <person name="Tashiro H."/>
            <person name="Tanigami A."/>
            <person name="Fujiwara T."/>
            <person name="Ono T."/>
            <person name="Yamada K."/>
            <person name="Fujii Y."/>
            <person name="Ozaki K."/>
            <person name="Hirao M."/>
            <person name="Ohmori Y."/>
            <person name="Kawabata A."/>
            <person name="Hikiji T."/>
            <person name="Kobatake N."/>
            <person name="Inagaki H."/>
            <person name="Ikema Y."/>
            <person name="Okamoto S."/>
            <person name="Okitani R."/>
            <person name="Kawakami T."/>
            <person name="Noguchi S."/>
            <person name="Itoh T."/>
            <person name="Shigeta K."/>
            <person name="Senba T."/>
            <person name="Matsumura K."/>
            <person name="Nakajima Y."/>
            <person name="Mizuno T."/>
            <person name="Morinaga M."/>
            <person name="Sasaki M."/>
            <person name="Togashi T."/>
            <person name="Oyama M."/>
            <person name="Hata H."/>
            <person name="Watanabe M."/>
            <person name="Komatsu T."/>
            <person name="Mizushima-Sugano J."/>
            <person name="Satoh T."/>
            <person name="Shirai Y."/>
            <person name="Takahashi Y."/>
            <person name="Nakagawa K."/>
            <person name="Okumura K."/>
            <person name="Nagase T."/>
            <person name="Nomura N."/>
            <person name="Kikuchi H."/>
            <person name="Masuho Y."/>
            <person name="Yamashita R."/>
            <person name="Nakai K."/>
            <person name="Yada T."/>
            <person name="Nakamura Y."/>
            <person name="Ohara O."/>
            <person name="Isogai T."/>
            <person name="Sugano S."/>
        </authorList>
    </citation>
    <scope>NUCLEOTIDE SEQUENCE [LARGE SCALE MRNA] (ISOFORMS 1 AND 2)</scope>
    <scope>NUCLEOTIDE SEQUENCE [LARGE SCALE MRNA] OF 176-482 (ISOFORM 4)</scope>
    <source>
        <tissue>Embryo</tissue>
        <tissue>Ileal mucosa</tissue>
        <tissue>Placenta</tissue>
    </source>
</reference>
<reference key="3">
    <citation type="journal article" date="2003" name="Nature">
        <title>The DNA sequence and analysis of human chromosome 14.</title>
        <authorList>
            <person name="Heilig R."/>
            <person name="Eckenberg R."/>
            <person name="Petit J.-L."/>
            <person name="Fonknechten N."/>
            <person name="Da Silva C."/>
            <person name="Cattolico L."/>
            <person name="Levy M."/>
            <person name="Barbe V."/>
            <person name="De Berardinis V."/>
            <person name="Ureta-Vidal A."/>
            <person name="Pelletier E."/>
            <person name="Vico V."/>
            <person name="Anthouard V."/>
            <person name="Rowen L."/>
            <person name="Madan A."/>
            <person name="Qin S."/>
            <person name="Sun H."/>
            <person name="Du H."/>
            <person name="Pepin K."/>
            <person name="Artiguenave F."/>
            <person name="Robert C."/>
            <person name="Cruaud C."/>
            <person name="Bruels T."/>
            <person name="Jaillon O."/>
            <person name="Friedlander L."/>
            <person name="Samson G."/>
            <person name="Brottier P."/>
            <person name="Cure S."/>
            <person name="Segurens B."/>
            <person name="Aniere F."/>
            <person name="Samain S."/>
            <person name="Crespeau H."/>
            <person name="Abbasi N."/>
            <person name="Aiach N."/>
            <person name="Boscus D."/>
            <person name="Dickhoff R."/>
            <person name="Dors M."/>
            <person name="Dubois I."/>
            <person name="Friedman C."/>
            <person name="Gouyvenoux M."/>
            <person name="James R."/>
            <person name="Madan A."/>
            <person name="Mairey-Estrada B."/>
            <person name="Mangenot S."/>
            <person name="Martins N."/>
            <person name="Menard M."/>
            <person name="Oztas S."/>
            <person name="Ratcliffe A."/>
            <person name="Shaffer T."/>
            <person name="Trask B."/>
            <person name="Vacherie B."/>
            <person name="Bellemere C."/>
            <person name="Belser C."/>
            <person name="Besnard-Gonnet M."/>
            <person name="Bartol-Mavel D."/>
            <person name="Boutard M."/>
            <person name="Briez-Silla S."/>
            <person name="Combette S."/>
            <person name="Dufosse-Laurent V."/>
            <person name="Ferron C."/>
            <person name="Lechaplais C."/>
            <person name="Louesse C."/>
            <person name="Muselet D."/>
            <person name="Magdelenat G."/>
            <person name="Pateau E."/>
            <person name="Petit E."/>
            <person name="Sirvain-Trukniewicz P."/>
            <person name="Trybou A."/>
            <person name="Vega-Czarny N."/>
            <person name="Bataille E."/>
            <person name="Bluet E."/>
            <person name="Bordelais I."/>
            <person name="Dubois M."/>
            <person name="Dumont C."/>
            <person name="Guerin T."/>
            <person name="Haffray S."/>
            <person name="Hammadi R."/>
            <person name="Muanga J."/>
            <person name="Pellouin V."/>
            <person name="Robert D."/>
            <person name="Wunderle E."/>
            <person name="Gauguet G."/>
            <person name="Roy A."/>
            <person name="Sainte-Marthe L."/>
            <person name="Verdier J."/>
            <person name="Verdier-Discala C."/>
            <person name="Hillier L.W."/>
            <person name="Fulton L."/>
            <person name="McPherson J."/>
            <person name="Matsuda F."/>
            <person name="Wilson R."/>
            <person name="Scarpelli C."/>
            <person name="Gyapay G."/>
            <person name="Wincker P."/>
            <person name="Saurin W."/>
            <person name="Quetier F."/>
            <person name="Waterston R."/>
            <person name="Hood L."/>
            <person name="Weissenbach J."/>
        </authorList>
    </citation>
    <scope>NUCLEOTIDE SEQUENCE [LARGE SCALE GENOMIC DNA]</scope>
</reference>
<reference key="4">
    <citation type="submission" date="2005-07" db="EMBL/GenBank/DDBJ databases">
        <authorList>
            <person name="Mural R.J."/>
            <person name="Istrail S."/>
            <person name="Sutton G.G."/>
            <person name="Florea L."/>
            <person name="Halpern A.L."/>
            <person name="Mobarry C.M."/>
            <person name="Lippert R."/>
            <person name="Walenz B."/>
            <person name="Shatkay H."/>
            <person name="Dew I."/>
            <person name="Miller J.R."/>
            <person name="Flanigan M.J."/>
            <person name="Edwards N.J."/>
            <person name="Bolanos R."/>
            <person name="Fasulo D."/>
            <person name="Halldorsson B.V."/>
            <person name="Hannenhalli S."/>
            <person name="Turner R."/>
            <person name="Yooseph S."/>
            <person name="Lu F."/>
            <person name="Nusskern D.R."/>
            <person name="Shue B.C."/>
            <person name="Zheng X.H."/>
            <person name="Zhong F."/>
            <person name="Delcher A.L."/>
            <person name="Huson D.H."/>
            <person name="Kravitz S.A."/>
            <person name="Mouchard L."/>
            <person name="Reinert K."/>
            <person name="Remington K.A."/>
            <person name="Clark A.G."/>
            <person name="Waterman M.S."/>
            <person name="Eichler E.E."/>
            <person name="Adams M.D."/>
            <person name="Hunkapiller M.W."/>
            <person name="Myers E.W."/>
            <person name="Venter J.C."/>
        </authorList>
    </citation>
    <scope>NUCLEOTIDE SEQUENCE [LARGE SCALE GENOMIC DNA]</scope>
</reference>
<reference key="5">
    <citation type="journal article" date="2004" name="Genome Res.">
        <title>The status, quality, and expansion of the NIH full-length cDNA project: the Mammalian Gene Collection (MGC).</title>
        <authorList>
            <consortium name="The MGC Project Team"/>
        </authorList>
    </citation>
    <scope>NUCLEOTIDE SEQUENCE [LARGE SCALE MRNA] (ISOFORM 2)</scope>
    <source>
        <tissue>Lung</tissue>
    </source>
</reference>
<reference key="6">
    <citation type="journal article" date="2008" name="Proc. Natl. Acad. Sci. U.S.A.">
        <title>A quantitative atlas of mitotic phosphorylation.</title>
        <authorList>
            <person name="Dephoure N."/>
            <person name="Zhou C."/>
            <person name="Villen J."/>
            <person name="Beausoleil S.A."/>
            <person name="Bakalarski C.E."/>
            <person name="Elledge S.J."/>
            <person name="Gygi S.P."/>
        </authorList>
    </citation>
    <scope>PHOSPHORYLATION [LARGE SCALE ANALYSIS] AT SER-86 AND SER-88</scope>
    <scope>IDENTIFICATION BY MASS SPECTROMETRY [LARGE SCALE ANALYSIS]</scope>
    <source>
        <tissue>Cervix carcinoma</tissue>
    </source>
</reference>
<reference key="7">
    <citation type="journal article" date="2009" name="Anal. Chem.">
        <title>Lys-N and trypsin cover complementary parts of the phosphoproteome in a refined SCX-based approach.</title>
        <authorList>
            <person name="Gauci S."/>
            <person name="Helbig A.O."/>
            <person name="Slijper M."/>
            <person name="Krijgsveld J."/>
            <person name="Heck A.J."/>
            <person name="Mohammed S."/>
        </authorList>
    </citation>
    <scope>IDENTIFICATION BY MASS SPECTROMETRY [LARGE SCALE ANALYSIS]</scope>
</reference>
<reference key="8">
    <citation type="journal article" date="2009" name="Mol. Cell. Proteomics">
        <title>Large-scale proteomics analysis of the human kinome.</title>
        <authorList>
            <person name="Oppermann F.S."/>
            <person name="Gnad F."/>
            <person name="Olsen J.V."/>
            <person name="Hornberger R."/>
            <person name="Greff Z."/>
            <person name="Keri G."/>
            <person name="Mann M."/>
            <person name="Daub H."/>
        </authorList>
    </citation>
    <scope>IDENTIFICATION BY MASS SPECTROMETRY [LARGE SCALE ANALYSIS]</scope>
</reference>
<reference key="9">
    <citation type="journal article" date="2009" name="Sci. Signal.">
        <title>Quantitative phosphoproteomic analysis of T cell receptor signaling reveals system-wide modulation of protein-protein interactions.</title>
        <authorList>
            <person name="Mayya V."/>
            <person name="Lundgren D.H."/>
            <person name="Hwang S.-I."/>
            <person name="Rezaul K."/>
            <person name="Wu L."/>
            <person name="Eng J.K."/>
            <person name="Rodionov V."/>
            <person name="Han D.K."/>
        </authorList>
    </citation>
    <scope>PHOSPHORYLATION [LARGE SCALE ANALYSIS] AT SER-86 AND SER-88</scope>
    <scope>IDENTIFICATION BY MASS SPECTROMETRY [LARGE SCALE ANALYSIS]</scope>
    <source>
        <tissue>Leukemic T-cell</tissue>
    </source>
</reference>
<reference key="10">
    <citation type="journal article" date="2010" name="Sci. Signal.">
        <title>Quantitative phosphoproteomics reveals widespread full phosphorylation site occupancy during mitosis.</title>
        <authorList>
            <person name="Olsen J.V."/>
            <person name="Vermeulen M."/>
            <person name="Santamaria A."/>
            <person name="Kumar C."/>
            <person name="Miller M.L."/>
            <person name="Jensen L.J."/>
            <person name="Gnad F."/>
            <person name="Cox J."/>
            <person name="Jensen T.S."/>
            <person name="Nigg E.A."/>
            <person name="Brunak S."/>
            <person name="Mann M."/>
        </authorList>
    </citation>
    <scope>PHOSPHORYLATION [LARGE SCALE ANALYSIS] AT SER-86; SER-88 AND SER-447</scope>
    <scope>IDENTIFICATION BY MASS SPECTROMETRY [LARGE SCALE ANALYSIS]</scope>
    <source>
        <tissue>Cervix carcinoma</tissue>
    </source>
</reference>
<reference key="11">
    <citation type="journal article" date="2011" name="Sci. Signal.">
        <title>System-wide temporal characterization of the proteome and phosphoproteome of human embryonic stem cell differentiation.</title>
        <authorList>
            <person name="Rigbolt K.T."/>
            <person name="Prokhorova T.A."/>
            <person name="Akimov V."/>
            <person name="Henningsen J."/>
            <person name="Johansen P.T."/>
            <person name="Kratchmarova I."/>
            <person name="Kassem M."/>
            <person name="Mann M."/>
            <person name="Olsen J.V."/>
            <person name="Blagoev B."/>
        </authorList>
    </citation>
    <scope>PHOSPHORYLATION [LARGE SCALE ANALYSIS] AT SER-86; SER-88; THR-91; SER-447 AND SER-449</scope>
    <scope>IDENTIFICATION BY MASS SPECTROMETRY [LARGE SCALE ANALYSIS]</scope>
</reference>
<reference key="12">
    <citation type="journal article" date="2013" name="J. Proteome Res.">
        <title>Toward a comprehensive characterization of a human cancer cell phosphoproteome.</title>
        <authorList>
            <person name="Zhou H."/>
            <person name="Di Palma S."/>
            <person name="Preisinger C."/>
            <person name="Peng M."/>
            <person name="Polat A.N."/>
            <person name="Heck A.J."/>
            <person name="Mohammed S."/>
        </authorList>
    </citation>
    <scope>PHOSPHORYLATION [LARGE SCALE ANALYSIS] AT SER-31</scope>
    <scope>IDENTIFICATION BY MASS SPECTROMETRY [LARGE SCALE ANALYSIS]</scope>
    <source>
        <tissue>Erythroleukemia</tissue>
    </source>
</reference>
<reference key="13">
    <citation type="journal article" date="2017" name="Nat. Struct. Mol. Biol.">
        <title>Site-specific mapping of the human SUMO proteome reveals co-modification with phosphorylation.</title>
        <authorList>
            <person name="Hendriks I.A."/>
            <person name="Lyon D."/>
            <person name="Young C."/>
            <person name="Jensen L.J."/>
            <person name="Vertegaal A.C."/>
            <person name="Nielsen M.L."/>
        </authorList>
    </citation>
    <scope>SUMOYLATION [LARGE SCALE ANALYSIS] AT LYS-196</scope>
    <scope>IDENTIFICATION BY MASS SPECTROMETRY [LARGE SCALE ANALYSIS]</scope>
</reference>
<sequence>MDELVHDLASALEQTSEQNKLGELWEEMALSPRQQRRQLRKRRGRKRRSDFTHLAEHTCCYSEASESSLDEATKDCREVAPVTNFSDSDDTMVAKRHPALNAIVKSKQHSWHESDSFTENAPCRPLRRRRKVKRVTSEVAASLQQKLKVSDWSYERGCRFKSAKKQRLSRWKENTPWTSSGHGLCESAENRTFLSKTGRKERMECETDEQKQGSDENMSECETSSVCSSSDTGLFTNDEGRQGDDEQSDWFYEGECVPGFTVPNLLPKWAPDHCSEVERMDSGLDKFSDSTFLLPSRPAQRGYHTRLNRLPGAAARCLRKGRRRLVGKETSINTLGTERISHIISDPRQKEKNKALASDFPHISACAHEFNPLSPLYSLDVLADASHRRCSPAHCSARQANVHWGPPCSRDIKRKRKPVATASLSSPSAVHMDAVEPTTPASQAPKSPSSEWLVRTSAAEKATDATTATFFKMPQEKSPGYS</sequence>
<evidence type="ECO:0000256" key="1">
    <source>
        <dbReference type="SAM" id="MobiDB-lite"/>
    </source>
</evidence>
<evidence type="ECO:0000303" key="2">
    <source>
    </source>
</evidence>
<evidence type="ECO:0000303" key="3">
    <source>
    </source>
</evidence>
<evidence type="ECO:0000303" key="4">
    <source>
    </source>
</evidence>
<evidence type="ECO:0000305" key="5"/>
<evidence type="ECO:0007744" key="6">
    <source>
    </source>
</evidence>
<evidence type="ECO:0007744" key="7">
    <source>
    </source>
</evidence>
<evidence type="ECO:0007744" key="8">
    <source>
    </source>
</evidence>
<evidence type="ECO:0007744" key="9">
    <source>
    </source>
</evidence>
<evidence type="ECO:0007744" key="10">
    <source>
    </source>
</evidence>
<evidence type="ECO:0007744" key="11">
    <source>
    </source>
</evidence>
<dbReference type="EMBL" id="AB032978">
    <property type="protein sequence ID" value="BAA86466.1"/>
    <property type="status" value="ALT_INIT"/>
    <property type="molecule type" value="mRNA"/>
</dbReference>
<dbReference type="EMBL" id="AK000696">
    <property type="protein sequence ID" value="BAA91325.1"/>
    <property type="status" value="ALT_FRAME"/>
    <property type="molecule type" value="mRNA"/>
</dbReference>
<dbReference type="EMBL" id="AK000895">
    <property type="protein sequence ID" value="BAA91411.1"/>
    <property type="status" value="ALT_INIT"/>
    <property type="molecule type" value="mRNA"/>
</dbReference>
<dbReference type="EMBL" id="AK023523">
    <property type="protein sequence ID" value="BAG51204.1"/>
    <property type="molecule type" value="mRNA"/>
</dbReference>
<dbReference type="EMBL" id="AC016526">
    <property type="protein sequence ID" value="AAG38637.1"/>
    <property type="molecule type" value="Genomic_DNA"/>
</dbReference>
<dbReference type="EMBL" id="CH471061">
    <property type="protein sequence ID" value="EAW81252.1"/>
    <property type="molecule type" value="Genomic_DNA"/>
</dbReference>
<dbReference type="EMBL" id="CH471061">
    <property type="protein sequence ID" value="EAW81253.1"/>
    <property type="molecule type" value="Genomic_DNA"/>
</dbReference>
<dbReference type="EMBL" id="BC058032">
    <property type="protein sequence ID" value="AAH58032.1"/>
    <property type="molecule type" value="mRNA"/>
</dbReference>
<dbReference type="CCDS" id="CCDS9848.1">
    <molecule id="Q9NWQ4-3"/>
</dbReference>
<dbReference type="CCDS" id="CCDS9849.1">
    <molecule id="Q9NWQ4-4"/>
</dbReference>
<dbReference type="RefSeq" id="NP_060396.2">
    <molecule id="Q9NWQ4-3"/>
    <property type="nucleotide sequence ID" value="NM_017926.3"/>
</dbReference>
<dbReference type="RefSeq" id="NP_060442.2">
    <molecule id="Q9NWQ4-4"/>
    <property type="nucleotide sequence ID" value="NM_017972.3"/>
</dbReference>
<dbReference type="RefSeq" id="XP_006720254.1">
    <property type="nucleotide sequence ID" value="XM_006720191.2"/>
</dbReference>
<dbReference type="BioGRID" id="120800">
    <property type="interactions" value="72"/>
</dbReference>
<dbReference type="FunCoup" id="Q9NWQ4">
    <property type="interactions" value="3237"/>
</dbReference>
<dbReference type="IntAct" id="Q9NWQ4">
    <property type="interactions" value="72"/>
</dbReference>
<dbReference type="MINT" id="Q9NWQ4"/>
<dbReference type="STRING" id="9606.ENSP00000261530"/>
<dbReference type="GlyGen" id="Q9NWQ4">
    <property type="glycosylation" value="1 site"/>
</dbReference>
<dbReference type="iPTMnet" id="Q9NWQ4"/>
<dbReference type="PhosphoSitePlus" id="Q9NWQ4"/>
<dbReference type="BioMuta" id="GPATCH2L"/>
<dbReference type="DMDM" id="308153614"/>
<dbReference type="jPOST" id="Q9NWQ4"/>
<dbReference type="MassIVE" id="Q9NWQ4"/>
<dbReference type="PaxDb" id="9606-ENSP00000261530"/>
<dbReference type="PeptideAtlas" id="Q9NWQ4"/>
<dbReference type="ProteomicsDB" id="82958">
    <molecule id="Q9NWQ4-3"/>
</dbReference>
<dbReference type="ProteomicsDB" id="82959">
    <molecule id="Q9NWQ4-1"/>
</dbReference>
<dbReference type="ProteomicsDB" id="82960">
    <molecule id="Q9NWQ4-4"/>
</dbReference>
<dbReference type="Antibodypedia" id="109">
    <property type="antibodies" value="24 antibodies from 10 providers"/>
</dbReference>
<dbReference type="DNASU" id="55668"/>
<dbReference type="Ensembl" id="ENST00000261530.12">
    <molecule id="Q9NWQ4-3"/>
    <property type="protein sequence ID" value="ENSP00000261530.7"/>
    <property type="gene ID" value="ENSG00000089916.18"/>
</dbReference>
<dbReference type="Ensembl" id="ENST00000312858.9">
    <molecule id="Q9NWQ4-4"/>
    <property type="protein sequence ID" value="ENSP00000323775.5"/>
    <property type="gene ID" value="ENSG00000089916.18"/>
</dbReference>
<dbReference type="Ensembl" id="ENST00000556663.5">
    <molecule id="Q9NWQ4-1"/>
    <property type="protein sequence ID" value="ENSP00000450657.1"/>
    <property type="gene ID" value="ENSG00000089916.18"/>
</dbReference>
<dbReference type="Ensembl" id="ENST00000557263.5">
    <molecule id="Q9NWQ4-1"/>
    <property type="protein sequence ID" value="ENSP00000451587.1"/>
    <property type="gene ID" value="ENSG00000089916.18"/>
</dbReference>
<dbReference type="Ensembl" id="ENST00000621494.1">
    <molecule id="Q9NWQ4-4"/>
    <property type="protein sequence ID" value="ENSP00000480608.1"/>
    <property type="gene ID" value="ENSG00000089916.18"/>
</dbReference>
<dbReference type="GeneID" id="55668"/>
<dbReference type="KEGG" id="hsa:55668"/>
<dbReference type="MANE-Select" id="ENST00000261530.12">
    <property type="protein sequence ID" value="ENSP00000261530.7"/>
    <property type="RefSeq nucleotide sequence ID" value="NM_017926.4"/>
    <property type="RefSeq protein sequence ID" value="NP_060396.2"/>
</dbReference>
<dbReference type="UCSC" id="uc001xsh.5">
    <molecule id="Q9NWQ4-3"/>
    <property type="organism name" value="human"/>
</dbReference>
<dbReference type="AGR" id="HGNC:20210"/>
<dbReference type="CTD" id="55668"/>
<dbReference type="DisGeNET" id="55668"/>
<dbReference type="GeneCards" id="GPATCH2L"/>
<dbReference type="HGNC" id="HGNC:20210">
    <property type="gene designation" value="GPATCH2L"/>
</dbReference>
<dbReference type="HPA" id="ENSG00000089916">
    <property type="expression patterns" value="Low tissue specificity"/>
</dbReference>
<dbReference type="neXtProt" id="NX_Q9NWQ4"/>
<dbReference type="OpenTargets" id="ENSG00000089916"/>
<dbReference type="PharmGKB" id="PA134963976"/>
<dbReference type="VEuPathDB" id="HostDB:ENSG00000089916"/>
<dbReference type="eggNOG" id="KOG0154">
    <property type="taxonomic scope" value="Eukaryota"/>
</dbReference>
<dbReference type="GeneTree" id="ENSGT00410000025698"/>
<dbReference type="HOGENOM" id="CLU_041240_0_1_1"/>
<dbReference type="InParanoid" id="Q9NWQ4"/>
<dbReference type="OMA" id="YQRDFWL"/>
<dbReference type="OrthoDB" id="6095487at2759"/>
<dbReference type="PAN-GO" id="Q9NWQ4">
    <property type="GO annotations" value="0 GO annotations based on evolutionary models"/>
</dbReference>
<dbReference type="PhylomeDB" id="Q9NWQ4"/>
<dbReference type="TreeFam" id="TF331954"/>
<dbReference type="PathwayCommons" id="Q9NWQ4"/>
<dbReference type="SignaLink" id="Q9NWQ4"/>
<dbReference type="BioGRID-ORCS" id="55668">
    <property type="hits" value="10 hits in 1157 CRISPR screens"/>
</dbReference>
<dbReference type="ChiTaRS" id="GPATCH2L">
    <property type="organism name" value="human"/>
</dbReference>
<dbReference type="GenomeRNAi" id="55668"/>
<dbReference type="Pharos" id="Q9NWQ4">
    <property type="development level" value="Tdark"/>
</dbReference>
<dbReference type="PRO" id="PR:Q9NWQ4"/>
<dbReference type="Proteomes" id="UP000005640">
    <property type="component" value="Chromosome 14"/>
</dbReference>
<dbReference type="RNAct" id="Q9NWQ4">
    <property type="molecule type" value="protein"/>
</dbReference>
<dbReference type="Bgee" id="ENSG00000089916">
    <property type="expression patterns" value="Expressed in buccal mucosa cell and 173 other cell types or tissues"/>
</dbReference>
<dbReference type="ExpressionAtlas" id="Q9NWQ4">
    <property type="expression patterns" value="baseline and differential"/>
</dbReference>
<dbReference type="GO" id="GO:0005634">
    <property type="term" value="C:nucleus"/>
    <property type="evidence" value="ECO:0000318"/>
    <property type="project" value="GO_Central"/>
</dbReference>
<dbReference type="InterPro" id="IPR051189">
    <property type="entry name" value="Splicing_assoc_domain"/>
</dbReference>
<dbReference type="PANTHER" id="PTHR14195">
    <property type="entry name" value="G PATCH DOMAIN CONTAINING PROTEIN 2"/>
    <property type="match status" value="1"/>
</dbReference>
<comment type="interaction">
    <interactant intactId="EBI-5666657">
        <id>Q9NWQ4</id>
    </interactant>
    <interactant intactId="EBI-739624">
        <id>Q8NHQ1</id>
        <label>CEP70</label>
    </interactant>
    <organismsDiffer>false</organismsDiffer>
    <experiments>3</experiments>
</comment>
<comment type="interaction">
    <interactant intactId="EBI-5666657">
        <id>Q9NWQ4</id>
    </interactant>
    <interactant intactId="EBI-2564275">
        <id>Q14689</id>
        <label>DIP2A</label>
    </interactant>
    <organismsDiffer>false</organismsDiffer>
    <experiments>3</experiments>
</comment>
<comment type="interaction">
    <interactant intactId="EBI-5666657">
        <id>Q9NWQ4</id>
    </interactant>
    <interactant intactId="EBI-10171697">
        <id>Q6A162</id>
        <label>KRT40</label>
    </interactant>
    <organismsDiffer>false</organismsDiffer>
    <experiments>3</experiments>
</comment>
<comment type="interaction">
    <interactant intactId="EBI-5666657">
        <id>Q9NWQ4</id>
    </interactant>
    <interactant intactId="EBI-10172052">
        <id>P60411</id>
        <label>KRTAP10-9</label>
    </interactant>
    <organismsDiffer>false</organismsDiffer>
    <experiments>3</experiments>
</comment>
<comment type="interaction">
    <interactant intactId="EBI-5666657">
        <id>Q9NWQ4</id>
    </interactant>
    <interactant intactId="EBI-739863">
        <id>Q9BQ66</id>
        <label>KRTAP4-12</label>
    </interactant>
    <organismsDiffer>false</organismsDiffer>
    <experiments>3</experiments>
</comment>
<comment type="interaction">
    <interactant intactId="EBI-5666657">
        <id>Q9NWQ4</id>
    </interactant>
    <interactant intactId="EBI-741037">
        <id>Q9BRK4</id>
        <label>LZTS2</label>
    </interactant>
    <organismsDiffer>false</organismsDiffer>
    <experiments>3</experiments>
</comment>
<comment type="interaction">
    <interactant intactId="EBI-5666657">
        <id>Q9NWQ4</id>
    </interactant>
    <interactant intactId="EBI-724076">
        <id>Q99750</id>
        <label>MDFI</label>
    </interactant>
    <organismsDiffer>false</organismsDiffer>
    <experiments>3</experiments>
</comment>
<comment type="interaction">
    <interactant intactId="EBI-5666657">
        <id>Q9NWQ4</id>
    </interactant>
    <interactant intactId="EBI-748397">
        <id>P50222</id>
        <label>MEOX2</label>
    </interactant>
    <organismsDiffer>false</organismsDiffer>
    <experiments>3</experiments>
</comment>
<comment type="interaction">
    <interactant intactId="EBI-5666657">
        <id>Q9NWQ4</id>
    </interactant>
    <interactant intactId="EBI-3957793">
        <id>Q9GZV8</id>
        <label>PRDM14</label>
    </interactant>
    <organismsDiffer>false</organismsDiffer>
    <experiments>3</experiments>
</comment>
<comment type="interaction">
    <interactant intactId="EBI-5666657">
        <id>Q9NWQ4</id>
    </interactant>
    <interactant intactId="EBI-740322">
        <id>Q93062</id>
        <label>RBPMS</label>
    </interactant>
    <organismsDiffer>false</organismsDiffer>
    <experiments>3</experiments>
</comment>
<comment type="interaction">
    <interactant intactId="EBI-5666657">
        <id>Q9NWQ4</id>
    </interactant>
    <interactant intactId="EBI-349968">
        <id>O43463</id>
        <label>SUV39H1</label>
    </interactant>
    <organismsDiffer>false</organismsDiffer>
    <experiments>2</experiments>
</comment>
<comment type="interaction">
    <interactant intactId="EBI-5666657">
        <id>Q9NWQ4</id>
    </interactant>
    <interactant intactId="EBI-741515">
        <id>Q9NVV9</id>
        <label>THAP1</label>
    </interactant>
    <organismsDiffer>false</organismsDiffer>
    <experiments>3</experiments>
</comment>
<comment type="interaction">
    <interactant intactId="EBI-5666657">
        <id>Q9NWQ4</id>
    </interactant>
    <interactant intactId="EBI-725997">
        <id>Q8WV44</id>
        <label>TRIM41</label>
    </interactant>
    <organismsDiffer>false</organismsDiffer>
    <experiments>3</experiments>
</comment>
<comment type="interaction">
    <interactant intactId="EBI-5666657">
        <id>Q9NWQ4</id>
    </interactant>
    <interactant intactId="EBI-744864">
        <id>P10074</id>
        <label>ZBTB48</label>
    </interactant>
    <organismsDiffer>false</organismsDiffer>
    <experiments>3</experiments>
</comment>
<comment type="interaction">
    <interactant intactId="EBI-5666657">
        <id>Q9NWQ4</id>
    </interactant>
    <interactant intactId="EBI-742740">
        <id>Q96BR9</id>
        <label>ZBTB8A</label>
    </interactant>
    <organismsDiffer>false</organismsDiffer>
    <experiments>3</experiments>
</comment>
<comment type="interaction">
    <interactant intactId="EBI-5666657">
        <id>Q9NWQ4</id>
    </interactant>
    <interactant intactId="EBI-10186058">
        <id>Q53Z40</id>
        <label>ZNF165</label>
    </interactant>
    <organismsDiffer>false</organismsDiffer>
    <experiments>3</experiments>
</comment>
<comment type="interaction">
    <interactant intactId="EBI-5666657">
        <id>Q9NWQ4</id>
    </interactant>
    <interactant intactId="EBI-744493">
        <id>O14978</id>
        <label>ZNF263</label>
    </interactant>
    <organismsDiffer>false</organismsDiffer>
    <experiments>3</experiments>
</comment>
<comment type="interaction">
    <interactant intactId="EBI-5666657">
        <id>Q9NWQ4</id>
    </interactant>
    <interactant intactId="EBI-8643207">
        <id>Q8TD17</id>
        <label>ZNF398</label>
    </interactant>
    <organismsDiffer>false</organismsDiffer>
    <experiments>5</experiments>
</comment>
<comment type="interaction">
    <interactant intactId="EBI-5666657">
        <id>Q9NWQ4</id>
    </interactant>
    <interactant intactId="EBI-347633">
        <id>Q9H9D4</id>
        <label>ZNF408</label>
    </interactant>
    <organismsDiffer>false</organismsDiffer>
    <experiments>3</experiments>
</comment>
<comment type="interaction">
    <interactant intactId="EBI-5666657">
        <id>Q9NWQ4</id>
    </interactant>
    <interactant intactId="EBI-751409">
        <id>Q8WTR7</id>
        <label>ZNF473</label>
    </interactant>
    <organismsDiffer>false</organismsDiffer>
    <experiments>4</experiments>
</comment>
<comment type="interaction">
    <interactant intactId="EBI-11959863">
        <id>Q9NWQ4-1</id>
    </interactant>
    <interactant intactId="EBI-10312707">
        <id>Q9NR55</id>
        <label>BATF3</label>
    </interactant>
    <organismsDiffer>false</organismsDiffer>
    <experiments>3</experiments>
</comment>
<comment type="interaction">
    <interactant intactId="EBI-11959863">
        <id>Q9NWQ4-1</id>
    </interactant>
    <interactant intactId="EBI-3866279">
        <id>Q9BWT7</id>
        <label>CARD10</label>
    </interactant>
    <organismsDiffer>false</organismsDiffer>
    <experiments>3</experiments>
</comment>
<comment type="interaction">
    <interactant intactId="EBI-11959863">
        <id>Q9NWQ4-1</id>
    </interactant>
    <interactant intactId="EBI-347804">
        <id>P68400</id>
        <label>CSNK2A1</label>
    </interactant>
    <organismsDiffer>false</organismsDiffer>
    <experiments>6</experiments>
</comment>
<comment type="interaction">
    <interactant intactId="EBI-11959863">
        <id>Q9NWQ4-1</id>
    </interactant>
    <interactant intactId="EBI-3867333">
        <id>A8MQ03</id>
        <label>CYSRT1</label>
    </interactant>
    <organismsDiffer>false</organismsDiffer>
    <experiments>3</experiments>
</comment>
<comment type="interaction">
    <interactant intactId="EBI-11959863">
        <id>Q9NWQ4-1</id>
    </interactant>
    <interactant intactId="EBI-348399">
        <id>P22607</id>
        <label>FGFR3</label>
    </interactant>
    <organismsDiffer>false</organismsDiffer>
    <experiments>3</experiments>
</comment>
<comment type="interaction">
    <interactant intactId="EBI-11959863">
        <id>Q9NWQ4-1</id>
    </interactant>
    <interactant intactId="EBI-7116203">
        <id>O75031</id>
        <label>HSF2BP</label>
    </interactant>
    <organismsDiffer>false</organismsDiffer>
    <experiments>3</experiments>
</comment>
<comment type="interaction">
    <interactant intactId="EBI-11959863">
        <id>Q9NWQ4-1</id>
    </interactant>
    <interactant intactId="EBI-399080">
        <id>Q92993</id>
        <label>KAT5</label>
    </interactant>
    <organismsDiffer>false</organismsDiffer>
    <experiments>3</experiments>
</comment>
<comment type="interaction">
    <interactant intactId="EBI-11959863">
        <id>Q9NWQ4-1</id>
    </interactant>
    <interactant intactId="EBI-8639312">
        <id>P25800</id>
        <label>LMO1</label>
    </interactant>
    <organismsDiffer>false</organismsDiffer>
    <experiments>3</experiments>
</comment>
<comment type="interaction">
    <interactant intactId="EBI-11959863">
        <id>Q9NWQ4-1</id>
    </interactant>
    <interactant intactId="EBI-11742507">
        <id>Q8TAP4-4</id>
        <label>LMO3</label>
    </interactant>
    <organismsDiffer>false</organismsDiffer>
    <experiments>6</experiments>
</comment>
<comment type="interaction">
    <interactant intactId="EBI-11959863">
        <id>Q9NWQ4-1</id>
    </interactant>
    <interactant intactId="EBI-10268010">
        <id>Q8N8X9</id>
        <label>MAB21L3</label>
    </interactant>
    <organismsDiffer>false</organismsDiffer>
    <experiments>3</experiments>
</comment>
<comment type="interaction">
    <interactant intactId="EBI-11959863">
        <id>Q9NWQ4-1</id>
    </interactant>
    <interactant intactId="EBI-724076">
        <id>Q99750</id>
        <label>MDFI</label>
    </interactant>
    <organismsDiffer>false</organismsDiffer>
    <experiments>3</experiments>
</comment>
<comment type="interaction">
    <interactant intactId="EBI-11959863">
        <id>Q9NWQ4-1</id>
    </interactant>
    <interactant intactId="EBI-16439278">
        <id>Q6FHY5</id>
        <label>MEOX2</label>
    </interactant>
    <organismsDiffer>false</organismsDiffer>
    <experiments>3</experiments>
</comment>
<comment type="interaction">
    <interactant intactId="EBI-11959863">
        <id>Q9NWQ4-1</id>
    </interactant>
    <interactant intactId="EBI-747693">
        <id>P41227</id>
        <label>NAA10</label>
    </interactant>
    <organismsDiffer>false</organismsDiffer>
    <experiments>3</experiments>
</comment>
<comment type="interaction">
    <interactant intactId="EBI-11959863">
        <id>Q9NWQ4-1</id>
    </interactant>
    <interactant intactId="EBI-1246238">
        <id>P17568</id>
        <label>NDUFB7</label>
    </interactant>
    <organismsDiffer>false</organismsDiffer>
    <experiments>3</experiments>
</comment>
<comment type="interaction">
    <interactant intactId="EBI-11959863">
        <id>Q9NWQ4-1</id>
    </interactant>
    <interactant intactId="EBI-350517">
        <id>Q9NR12</id>
        <label>PDLIM7</label>
    </interactant>
    <organismsDiffer>false</organismsDiffer>
    <experiments>3</experiments>
</comment>
<comment type="interaction">
    <interactant intactId="EBI-11959863">
        <id>Q9NWQ4-1</id>
    </interactant>
    <interactant intactId="EBI-2876622">
        <id>Q9UPG8</id>
        <label>PLAGL2</label>
    </interactant>
    <organismsDiffer>false</organismsDiffer>
    <experiments>3</experiments>
</comment>
<comment type="interaction">
    <interactant intactId="EBI-11959863">
        <id>Q9NWQ4-1</id>
    </interactant>
    <interactant intactId="EBI-302355">
        <id>Q9UL42</id>
        <label>PNMA2</label>
    </interactant>
    <organismsDiffer>false</organismsDiffer>
    <experiments>3</experiments>
</comment>
<comment type="interaction">
    <interactant intactId="EBI-11959863">
        <id>Q9NWQ4-1</id>
    </interactant>
    <interactant intactId="EBI-25884072">
        <id>P62937-2</id>
        <label>PPIA</label>
    </interactant>
    <organismsDiffer>false</organismsDiffer>
    <experiments>3</experiments>
</comment>
<comment type="interaction">
    <interactant intactId="EBI-11959863">
        <id>Q9NWQ4-1</id>
    </interactant>
    <interactant intactId="EBI-359252">
        <id>P23284</id>
        <label>PPIB</label>
    </interactant>
    <organismsDiffer>false</organismsDiffer>
    <experiments>3</experiments>
</comment>
<comment type="interaction">
    <interactant intactId="EBI-11959863">
        <id>Q9NWQ4-1</id>
    </interactant>
    <interactant intactId="EBI-3957793">
        <id>Q9GZV8</id>
        <label>PRDM14</label>
    </interactant>
    <organismsDiffer>false</organismsDiffer>
    <experiments>3</experiments>
</comment>
<comment type="interaction">
    <interactant intactId="EBI-11959863">
        <id>Q9NWQ4-1</id>
    </interactant>
    <interactant intactId="EBI-355546">
        <id>P61289</id>
        <label>PSME3</label>
    </interactant>
    <organismsDiffer>false</organismsDiffer>
    <experiments>3</experiments>
</comment>
<comment type="interaction">
    <interactant intactId="EBI-11959863">
        <id>Q9NWQ4-1</id>
    </interactant>
    <interactant intactId="EBI-741332">
        <id>P57052</id>
        <label>RBM11</label>
    </interactant>
    <organismsDiffer>false</organismsDiffer>
    <experiments>3</experiments>
</comment>
<comment type="interaction">
    <interactant intactId="EBI-11959863">
        <id>Q9NWQ4-1</id>
    </interactant>
    <interactant intactId="EBI-9090795">
        <id>Q15047-2</id>
        <label>SETDB1</label>
    </interactant>
    <organismsDiffer>false</organismsDiffer>
    <experiments>3</experiments>
</comment>
<comment type="interaction">
    <interactant intactId="EBI-11959863">
        <id>Q9NWQ4-1</id>
    </interactant>
    <interactant intactId="EBI-5235340">
        <id>Q7Z699</id>
        <label>SPRED1</label>
    </interactant>
    <organismsDiffer>false</organismsDiffer>
    <experiments>3</experiments>
</comment>
<comment type="interaction">
    <interactant intactId="EBI-11959863">
        <id>Q9NWQ4-1</id>
    </interactant>
    <interactant intactId="EBI-741515">
        <id>Q9NVV9</id>
        <label>THAP1</label>
    </interactant>
    <organismsDiffer>false</organismsDiffer>
    <experiments>5</experiments>
</comment>
<comment type="interaction">
    <interactant intactId="EBI-11959863">
        <id>Q9NWQ4-1</id>
    </interactant>
    <interactant intactId="EBI-11741437">
        <id>Q08117-2</id>
        <label>TLE5</label>
    </interactant>
    <organismsDiffer>false</organismsDiffer>
    <experiments>3</experiments>
</comment>
<comment type="interaction">
    <interactant intactId="EBI-11959863">
        <id>Q9NWQ4-1</id>
    </interactant>
    <interactant intactId="EBI-492476">
        <id>Q96RU7</id>
        <label>TRIB3</label>
    </interactant>
    <organismsDiffer>false</organismsDiffer>
    <experiments>3</experiments>
</comment>
<comment type="interaction">
    <interactant intactId="EBI-11959863">
        <id>Q9NWQ4-1</id>
    </interactant>
    <interactant intactId="EBI-725997">
        <id>Q8WV44</id>
        <label>TRIM41</label>
    </interactant>
    <organismsDiffer>false</organismsDiffer>
    <experiments>3</experiments>
</comment>
<comment type="interaction">
    <interactant intactId="EBI-11959863">
        <id>Q9NWQ4-1</id>
    </interactant>
    <interactant intactId="EBI-12806590">
        <id>Q86WV8</id>
        <label>TSC1</label>
    </interactant>
    <organismsDiffer>false</organismsDiffer>
    <experiments>3</experiments>
</comment>
<comment type="interaction">
    <interactant intactId="EBI-11959863">
        <id>Q9NWQ4-1</id>
    </interactant>
    <interactant intactId="EBI-723389">
        <id>Q6FI91</id>
        <label>TSPYL</label>
    </interactant>
    <organismsDiffer>false</organismsDiffer>
    <experiments>3</experiments>
</comment>
<comment type="interaction">
    <interactant intactId="EBI-11959863">
        <id>Q9NWQ4-1</id>
    </interactant>
    <interactant intactId="EBI-359832">
        <id>P61981</id>
        <label>YWHAG</label>
    </interactant>
    <organismsDiffer>false</organismsDiffer>
    <experiments>3</experiments>
</comment>
<comment type="interaction">
    <interactant intactId="EBI-11959863">
        <id>Q9NWQ4-1</id>
    </interactant>
    <interactant intactId="EBI-744493">
        <id>O14978</id>
        <label>ZNF263</label>
    </interactant>
    <organismsDiffer>false</organismsDiffer>
    <experiments>3</experiments>
</comment>
<comment type="interaction">
    <interactant intactId="EBI-11959863">
        <id>Q9NWQ4-1</id>
    </interactant>
    <interactant intactId="EBI-11035148">
        <id>Q8TF50</id>
        <label>ZNF526</label>
    </interactant>
    <organismsDiffer>false</organismsDiffer>
    <experiments>3</experiments>
</comment>
<comment type="interaction">
    <interactant intactId="EBI-11959863">
        <id>Q9NWQ4-1</id>
    </interactant>
    <interactant intactId="EBI-12895421">
        <id>Q8IVP9</id>
        <label>ZNF547</label>
    </interactant>
    <organismsDiffer>false</organismsDiffer>
    <experiments>3</experiments>
</comment>
<comment type="interaction">
    <interactant intactId="EBI-11959863">
        <id>Q9NWQ4-1</id>
    </interactant>
    <interactant intactId="EBI-11962574">
        <id>Q96EG3</id>
        <label>ZNF837</label>
    </interactant>
    <organismsDiffer>false</organismsDiffer>
    <experiments>3</experiments>
</comment>
<comment type="alternative products">
    <event type="alternative splicing"/>
    <isoform>
        <id>Q9NWQ4-3</id>
        <name>1</name>
        <sequence type="displayed"/>
    </isoform>
    <isoform>
        <id>Q9NWQ4-1</id>
        <name>2</name>
        <sequence type="described" ref="VSP_014714 VSP_014716"/>
    </isoform>
    <isoform>
        <id>Q9NWQ4-4</id>
        <name>4</name>
        <sequence type="described" ref="VSP_039861"/>
    </isoform>
</comment>
<comment type="sequence caution" evidence="5">
    <conflict type="erroneous initiation">
        <sequence resource="EMBL-CDS" id="BAA86466"/>
    </conflict>
    <text>Extended N-terminus.</text>
</comment>
<comment type="sequence caution" evidence="5">
    <conflict type="frameshift">
        <sequence resource="EMBL-CDS" id="BAA91325"/>
    </conflict>
</comment>
<comment type="sequence caution" evidence="5">
    <conflict type="erroneous initiation">
        <sequence resource="EMBL-CDS" id="BAA91411"/>
    </conflict>
    <text>Truncated N-terminus.</text>
</comment>